<name>YJJB_ECOLI</name>
<feature type="chain" id="PRO_0000169804" description="Probable succinate transporter subunit YjjB">
    <location>
        <begin position="1"/>
        <end position="157"/>
    </location>
</feature>
<feature type="transmembrane region" description="Helical" evidence="1">
    <location>
        <begin position="8"/>
        <end position="28"/>
    </location>
</feature>
<feature type="transmembrane region" description="Helical" evidence="1">
    <location>
        <begin position="50"/>
        <end position="70"/>
    </location>
</feature>
<feature type="transmembrane region" description="Helical" evidence="1">
    <location>
        <begin position="87"/>
        <end position="107"/>
    </location>
</feature>
<feature type="transmembrane region" description="Helical" evidence="1">
    <location>
        <begin position="129"/>
        <end position="149"/>
    </location>
</feature>
<feature type="sequence conflict" description="In Ref. 1." evidence="4" ref="1">
    <original>RPRV</original>
    <variation>PLAYKIASLKHTDERQPPLLRVLL</variation>
    <location>
        <begin position="154"/>
        <end position="157"/>
    </location>
</feature>
<sequence length="157" mass="17047">MGVIEFLLALAQDMILAAIPAVGFAMVFNVPVRALRWCALLGSIGHGSRMILMTSGLNIEWSTFMASMLVGTIGIQWSRWYLAHPKVFTVAAVIPMFPGISAYTAMISAVKISQLGYSEPLMITLLTNFLTASSIVGALSIGLSIPGLWLYRKRPRV</sequence>
<accession>P0ADD2</accession>
<accession>P18389</accession>
<accession>Q2M5V3</accession>
<comment type="function">
    <text evidence="2">Involved in succinate export with YjjP. Both proteins are required for export (PubMed:28673128). Contributes to succinate production under both aerobic and anaerobic conditions (PubMed:28673128).</text>
</comment>
<comment type="subunit">
    <text evidence="1 2">The transporter is composed of YjjB and YjjP.</text>
</comment>
<comment type="subcellular location">
    <subcellularLocation>
        <location evidence="1 4">Cell inner membrane</location>
        <topology evidence="1">Multi-pass membrane protein</topology>
    </subcellularLocation>
</comment>
<comment type="disruption phenotype">
    <text evidence="2">Deletion of yjjPB decreases succinate production in E.coli by 70% under anaerobic conditions.</text>
</comment>
<comment type="miscellaneous">
    <text evidence="3">YjjPB constitutes a split-type ThrE family transporter.</text>
</comment>
<comment type="similarity">
    <text evidence="1 4">Belongs to the ThrE exporter (TC 2.A.79) family.</text>
</comment>
<comment type="sequence caution" evidence="4">
    <conflict type="erroneous initiation">
        <sequence resource="EMBL-CDS" id="AAA23698"/>
    </conflict>
</comment>
<comment type="sequence caution" evidence="4">
    <conflict type="erroneous initiation">
        <sequence resource="EMBL-CDS" id="AAA97262"/>
    </conflict>
</comment>
<comment type="sequence caution" evidence="4">
    <conflict type="erroneous initiation">
        <sequence resource="EMBL-CDS" id="BAE78353"/>
    </conflict>
</comment>
<gene>
    <name evidence="1" type="primary">yjjB</name>
    <name type="ordered locus">b4363</name>
    <name type="ordered locus">JW4327</name>
</gene>
<dbReference type="EMBL" id="J04030">
    <property type="protein sequence ID" value="AAA23698.1"/>
    <property type="status" value="ALT_INIT"/>
    <property type="molecule type" value="Genomic_DNA"/>
</dbReference>
<dbReference type="EMBL" id="U14003">
    <property type="protein sequence ID" value="AAA97262.1"/>
    <property type="status" value="ALT_INIT"/>
    <property type="molecule type" value="Genomic_DNA"/>
</dbReference>
<dbReference type="EMBL" id="U00096">
    <property type="protein sequence ID" value="AAC77319.2"/>
    <property type="molecule type" value="Genomic_DNA"/>
</dbReference>
<dbReference type="EMBL" id="AP009048">
    <property type="protein sequence ID" value="BAE78353.1"/>
    <property type="status" value="ALT_INIT"/>
    <property type="molecule type" value="Genomic_DNA"/>
</dbReference>
<dbReference type="PIR" id="S56590">
    <property type="entry name" value="RMEC14"/>
</dbReference>
<dbReference type="RefSeq" id="NP_418783.2">
    <property type="nucleotide sequence ID" value="NC_000913.3"/>
</dbReference>
<dbReference type="RefSeq" id="WP_000538191.1">
    <property type="nucleotide sequence ID" value="NZ_SSUR01000004.1"/>
</dbReference>
<dbReference type="BioGRID" id="4262775">
    <property type="interactions" value="229"/>
</dbReference>
<dbReference type="FunCoup" id="P0ADD2">
    <property type="interactions" value="114"/>
</dbReference>
<dbReference type="STRING" id="511145.b4363"/>
<dbReference type="TCDB" id="2.A.79.2.1">
    <property type="family name" value="the threonine/serine exporter (thre) family"/>
</dbReference>
<dbReference type="PaxDb" id="511145-b4363"/>
<dbReference type="EnsemblBacteria" id="AAC77319">
    <property type="protein sequence ID" value="AAC77319"/>
    <property type="gene ID" value="b4363"/>
</dbReference>
<dbReference type="GeneID" id="948811"/>
<dbReference type="KEGG" id="ecj:JW4327"/>
<dbReference type="KEGG" id="eco:b4363"/>
<dbReference type="KEGG" id="ecoc:C3026_23570"/>
<dbReference type="PATRIC" id="fig|1411691.4.peg.2323"/>
<dbReference type="EchoBASE" id="EB1199"/>
<dbReference type="eggNOG" id="COG3610">
    <property type="taxonomic scope" value="Bacteria"/>
</dbReference>
<dbReference type="HOGENOM" id="CLU_117642_1_0_6"/>
<dbReference type="InParanoid" id="P0ADD2"/>
<dbReference type="OMA" id="AMVEINH"/>
<dbReference type="OrthoDB" id="9810047at2"/>
<dbReference type="PhylomeDB" id="P0ADD2"/>
<dbReference type="BioCyc" id="EcoCyc:EG11215-MONOMER"/>
<dbReference type="PRO" id="PR:P0ADD2"/>
<dbReference type="Proteomes" id="UP000000625">
    <property type="component" value="Chromosome"/>
</dbReference>
<dbReference type="GO" id="GO:0005886">
    <property type="term" value="C:plasma membrane"/>
    <property type="evidence" value="ECO:0000314"/>
    <property type="project" value="EcoCyc"/>
</dbReference>
<dbReference type="GO" id="GO:0006970">
    <property type="term" value="P:response to osmotic stress"/>
    <property type="evidence" value="ECO:0000315"/>
    <property type="project" value="EcoCyc"/>
</dbReference>
<dbReference type="GO" id="GO:1901652">
    <property type="term" value="P:response to peptide"/>
    <property type="evidence" value="ECO:0000315"/>
    <property type="project" value="EcoCyc"/>
</dbReference>
<dbReference type="GO" id="GO:0015744">
    <property type="term" value="P:succinate transport"/>
    <property type="evidence" value="ECO:0000315"/>
    <property type="project" value="EcoCyc"/>
</dbReference>
<dbReference type="HAMAP" id="MF_01191">
    <property type="entry name" value="YjjB"/>
    <property type="match status" value="1"/>
</dbReference>
<dbReference type="InterPro" id="IPR024528">
    <property type="entry name" value="ThrE_2"/>
</dbReference>
<dbReference type="InterPro" id="IPR050539">
    <property type="entry name" value="ThrE_Dicarb/AminoAcid_Exp"/>
</dbReference>
<dbReference type="InterPro" id="IPR020914">
    <property type="entry name" value="YjjB"/>
</dbReference>
<dbReference type="NCBIfam" id="NF007391">
    <property type="entry name" value="PRK09917.1"/>
    <property type="match status" value="1"/>
</dbReference>
<dbReference type="PANTHER" id="PTHR34390:SF1">
    <property type="entry name" value="SUCCINATE TRANSPORTER SUBUNIT YJJB-RELATED"/>
    <property type="match status" value="1"/>
</dbReference>
<dbReference type="PANTHER" id="PTHR34390">
    <property type="entry name" value="UPF0442 PROTEIN YJJB-RELATED"/>
    <property type="match status" value="1"/>
</dbReference>
<dbReference type="Pfam" id="PF12821">
    <property type="entry name" value="ThrE_2"/>
    <property type="match status" value="1"/>
</dbReference>
<reference key="1">
    <citation type="journal article" date="1988" name="J. Biol. Chem.">
        <title>Operon structure of dnaT and dnaC genes essential for normal and stable DNA replication of Escherichia coli chromosome.</title>
        <authorList>
            <person name="Masai H."/>
            <person name="Arai K."/>
        </authorList>
    </citation>
    <scope>NUCLEOTIDE SEQUENCE [GENOMIC DNA]</scope>
    <source>
        <strain>K12</strain>
    </source>
</reference>
<reference key="2">
    <citation type="journal article" date="1995" name="Nucleic Acids Res.">
        <title>Analysis of the Escherichia coli genome VI: DNA sequence of the region from 92.8 through 100 minutes.</title>
        <authorList>
            <person name="Burland V.D."/>
            <person name="Plunkett G. III"/>
            <person name="Sofia H.J."/>
            <person name="Daniels D.L."/>
            <person name="Blattner F.R."/>
        </authorList>
    </citation>
    <scope>NUCLEOTIDE SEQUENCE [LARGE SCALE GENOMIC DNA]</scope>
    <source>
        <strain>K12 / MG1655 / ATCC 47076</strain>
    </source>
</reference>
<reference key="3">
    <citation type="journal article" date="1997" name="Science">
        <title>The complete genome sequence of Escherichia coli K-12.</title>
        <authorList>
            <person name="Blattner F.R."/>
            <person name="Plunkett G. III"/>
            <person name="Bloch C.A."/>
            <person name="Perna N.T."/>
            <person name="Burland V."/>
            <person name="Riley M."/>
            <person name="Collado-Vides J."/>
            <person name="Glasner J.D."/>
            <person name="Rode C.K."/>
            <person name="Mayhew G.F."/>
            <person name="Gregor J."/>
            <person name="Davis N.W."/>
            <person name="Kirkpatrick H.A."/>
            <person name="Goeden M.A."/>
            <person name="Rose D.J."/>
            <person name="Mau B."/>
            <person name="Shao Y."/>
        </authorList>
    </citation>
    <scope>NUCLEOTIDE SEQUENCE [LARGE SCALE GENOMIC DNA]</scope>
    <source>
        <strain>K12 / MG1655 / ATCC 47076</strain>
    </source>
</reference>
<reference key="4">
    <citation type="journal article" date="2006" name="Mol. Syst. Biol.">
        <title>Highly accurate genome sequences of Escherichia coli K-12 strains MG1655 and W3110.</title>
        <authorList>
            <person name="Hayashi K."/>
            <person name="Morooka N."/>
            <person name="Yamamoto Y."/>
            <person name="Fujita K."/>
            <person name="Isono K."/>
            <person name="Choi S."/>
            <person name="Ohtsubo E."/>
            <person name="Baba T."/>
            <person name="Wanner B.L."/>
            <person name="Mori H."/>
            <person name="Horiuchi T."/>
        </authorList>
    </citation>
    <scope>NUCLEOTIDE SEQUENCE [LARGE SCALE GENOMIC DNA]</scope>
    <source>
        <strain>K12 / W3110 / ATCC 27325 / DSM 5911</strain>
    </source>
</reference>
<reference key="5">
    <citation type="journal article" date="1997" name="Electrophoresis">
        <title>Escherichia coli proteome analysis using the gene-protein database.</title>
        <authorList>
            <person name="VanBogelen R.A."/>
            <person name="Abshire K.Z."/>
            <person name="Moldover B."/>
            <person name="Olson E.R."/>
            <person name="Neidhardt F.C."/>
        </authorList>
    </citation>
    <scope>IDENTIFICATION BY 2D-GEL</scope>
</reference>
<reference key="6">
    <citation type="journal article" date="2017" name="Biosci. Biotechnol. Biochem.">
        <title>Escherichia coli yjjPB genes encode a succinate transporter important for succinate production.</title>
        <authorList>
            <person name="Fukui K."/>
            <person name="Nanatani K."/>
            <person name="Hara Y."/>
            <person name="Yamakami S."/>
            <person name="Yahagi D."/>
            <person name="Chinen A."/>
            <person name="Tokura M."/>
            <person name="Abe K."/>
        </authorList>
    </citation>
    <scope>FUNCTION</scope>
    <scope>SUBUNIT</scope>
    <scope>DISRUPTION PHENOTYPE</scope>
</reference>
<organism>
    <name type="scientific">Escherichia coli (strain K12)</name>
    <dbReference type="NCBI Taxonomy" id="83333"/>
    <lineage>
        <taxon>Bacteria</taxon>
        <taxon>Pseudomonadati</taxon>
        <taxon>Pseudomonadota</taxon>
        <taxon>Gammaproteobacteria</taxon>
        <taxon>Enterobacterales</taxon>
        <taxon>Enterobacteriaceae</taxon>
        <taxon>Escherichia</taxon>
    </lineage>
</organism>
<proteinExistence type="evidence at protein level"/>
<keyword id="KW-0997">Cell inner membrane</keyword>
<keyword id="KW-1003">Cell membrane</keyword>
<keyword id="KW-0472">Membrane</keyword>
<keyword id="KW-1185">Reference proteome</keyword>
<keyword id="KW-0812">Transmembrane</keyword>
<keyword id="KW-1133">Transmembrane helix</keyword>
<keyword id="KW-0813">Transport</keyword>
<protein>
    <recommendedName>
        <fullName evidence="1 4">Probable succinate transporter subunit YjjB</fullName>
    </recommendedName>
</protein>
<evidence type="ECO:0000255" key="1">
    <source>
        <dbReference type="HAMAP-Rule" id="MF_01191"/>
    </source>
</evidence>
<evidence type="ECO:0000269" key="2">
    <source>
    </source>
</evidence>
<evidence type="ECO:0000303" key="3">
    <source>
    </source>
</evidence>
<evidence type="ECO:0000305" key="4"/>